<dbReference type="EC" id="7.6.2.-" evidence="1"/>
<dbReference type="EMBL" id="CP000251">
    <property type="protein sequence ID" value="ABC83177.1"/>
    <property type="molecule type" value="Genomic_DNA"/>
</dbReference>
<dbReference type="RefSeq" id="WP_011422459.1">
    <property type="nucleotide sequence ID" value="NC_007760.1"/>
</dbReference>
<dbReference type="SMR" id="Q2IF17"/>
<dbReference type="STRING" id="290397.Adeh_3410"/>
<dbReference type="KEGG" id="ade:Adeh_3410"/>
<dbReference type="eggNOG" id="COG1136">
    <property type="taxonomic scope" value="Bacteria"/>
</dbReference>
<dbReference type="HOGENOM" id="CLU_000604_1_22_7"/>
<dbReference type="OrthoDB" id="9809450at2"/>
<dbReference type="Proteomes" id="UP000001935">
    <property type="component" value="Chromosome"/>
</dbReference>
<dbReference type="GO" id="GO:0005886">
    <property type="term" value="C:plasma membrane"/>
    <property type="evidence" value="ECO:0007669"/>
    <property type="project" value="UniProtKB-SubCell"/>
</dbReference>
<dbReference type="GO" id="GO:0005524">
    <property type="term" value="F:ATP binding"/>
    <property type="evidence" value="ECO:0007669"/>
    <property type="project" value="UniProtKB-KW"/>
</dbReference>
<dbReference type="GO" id="GO:0016887">
    <property type="term" value="F:ATP hydrolysis activity"/>
    <property type="evidence" value="ECO:0007669"/>
    <property type="project" value="InterPro"/>
</dbReference>
<dbReference type="GO" id="GO:0022857">
    <property type="term" value="F:transmembrane transporter activity"/>
    <property type="evidence" value="ECO:0007669"/>
    <property type="project" value="TreeGrafter"/>
</dbReference>
<dbReference type="GO" id="GO:0044874">
    <property type="term" value="P:lipoprotein localization to outer membrane"/>
    <property type="evidence" value="ECO:0007669"/>
    <property type="project" value="TreeGrafter"/>
</dbReference>
<dbReference type="GO" id="GO:0089705">
    <property type="term" value="P:protein localization to outer membrane"/>
    <property type="evidence" value="ECO:0007669"/>
    <property type="project" value="TreeGrafter"/>
</dbReference>
<dbReference type="CDD" id="cd03255">
    <property type="entry name" value="ABC_MJ0796_LolCDE_FtsE"/>
    <property type="match status" value="1"/>
</dbReference>
<dbReference type="FunFam" id="3.40.50.300:FF:000032">
    <property type="entry name" value="Export ABC transporter ATP-binding protein"/>
    <property type="match status" value="1"/>
</dbReference>
<dbReference type="Gene3D" id="3.40.50.300">
    <property type="entry name" value="P-loop containing nucleotide triphosphate hydrolases"/>
    <property type="match status" value="1"/>
</dbReference>
<dbReference type="InterPro" id="IPR003593">
    <property type="entry name" value="AAA+_ATPase"/>
</dbReference>
<dbReference type="InterPro" id="IPR003439">
    <property type="entry name" value="ABC_transporter-like_ATP-bd"/>
</dbReference>
<dbReference type="InterPro" id="IPR017871">
    <property type="entry name" value="ABC_transporter-like_CS"/>
</dbReference>
<dbReference type="InterPro" id="IPR015854">
    <property type="entry name" value="ABC_transpr_LolD-like"/>
</dbReference>
<dbReference type="InterPro" id="IPR017911">
    <property type="entry name" value="MacB-like_ATP-bd"/>
</dbReference>
<dbReference type="InterPro" id="IPR027417">
    <property type="entry name" value="P-loop_NTPase"/>
</dbReference>
<dbReference type="PANTHER" id="PTHR24220">
    <property type="entry name" value="IMPORT ATP-BINDING PROTEIN"/>
    <property type="match status" value="1"/>
</dbReference>
<dbReference type="PANTHER" id="PTHR24220:SF689">
    <property type="entry name" value="LIPOPROTEIN-RELEASING SYSTEM ATP-BINDING PROTEIN LOLD"/>
    <property type="match status" value="1"/>
</dbReference>
<dbReference type="Pfam" id="PF00005">
    <property type="entry name" value="ABC_tran"/>
    <property type="match status" value="1"/>
</dbReference>
<dbReference type="SMART" id="SM00382">
    <property type="entry name" value="AAA"/>
    <property type="match status" value="1"/>
</dbReference>
<dbReference type="SUPFAM" id="SSF52540">
    <property type="entry name" value="P-loop containing nucleoside triphosphate hydrolases"/>
    <property type="match status" value="1"/>
</dbReference>
<dbReference type="PROSITE" id="PS00211">
    <property type="entry name" value="ABC_TRANSPORTER_1"/>
    <property type="match status" value="1"/>
</dbReference>
<dbReference type="PROSITE" id="PS50893">
    <property type="entry name" value="ABC_TRANSPORTER_2"/>
    <property type="match status" value="1"/>
</dbReference>
<dbReference type="PROSITE" id="PS51244">
    <property type="entry name" value="LOLD"/>
    <property type="match status" value="1"/>
</dbReference>
<organism>
    <name type="scientific">Anaeromyxobacter dehalogenans (strain 2CP-C)</name>
    <dbReference type="NCBI Taxonomy" id="290397"/>
    <lineage>
        <taxon>Bacteria</taxon>
        <taxon>Pseudomonadati</taxon>
        <taxon>Myxococcota</taxon>
        <taxon>Myxococcia</taxon>
        <taxon>Myxococcales</taxon>
        <taxon>Cystobacterineae</taxon>
        <taxon>Anaeromyxobacteraceae</taxon>
        <taxon>Anaeromyxobacter</taxon>
    </lineage>
</organism>
<feature type="chain" id="PRO_0000272053" description="Lipoprotein-releasing system ATP-binding protein LolD">
    <location>
        <begin position="1"/>
        <end position="239"/>
    </location>
</feature>
<feature type="domain" description="ABC transporter" evidence="1">
    <location>
        <begin position="10"/>
        <end position="239"/>
    </location>
</feature>
<feature type="binding site" evidence="1">
    <location>
        <begin position="46"/>
        <end position="53"/>
    </location>
    <ligand>
        <name>ATP</name>
        <dbReference type="ChEBI" id="CHEBI:30616"/>
    </ligand>
</feature>
<keyword id="KW-0067">ATP-binding</keyword>
<keyword id="KW-0997">Cell inner membrane</keyword>
<keyword id="KW-1003">Cell membrane</keyword>
<keyword id="KW-0472">Membrane</keyword>
<keyword id="KW-0547">Nucleotide-binding</keyword>
<keyword id="KW-1185">Reference proteome</keyword>
<keyword id="KW-1278">Translocase</keyword>
<keyword id="KW-0813">Transport</keyword>
<gene>
    <name evidence="1" type="primary">lolD</name>
    <name type="ordered locus">Adeh_3410</name>
</gene>
<protein>
    <recommendedName>
        <fullName evidence="1">Lipoprotein-releasing system ATP-binding protein LolD</fullName>
        <ecNumber evidence="1">7.6.2.-</ecNumber>
    </recommendedName>
</protein>
<sequence length="239" mass="25432">MAEPVATPTVELSGVRKDYVAGPVVTPVLHGVDLTVGAGEFTALMGPSGSGKSTLLNLIGLLDRPTGGRVRVAGLDTAALDDDAMARTRGRTIGFVFQFHHLLPAFTALENVMIPMMAARGRAAPDMAECGEHLLRQVGLGAVLHRRATQLSGGQQQRVAIARALAMAPRLVLADEPTGNLDTHAADEVFALLREFNRRAGITFLIVTHDPRLADRCDRIVELVDGRIVADGPHRRSGA</sequence>
<proteinExistence type="inferred from homology"/>
<evidence type="ECO:0000255" key="1">
    <source>
        <dbReference type="HAMAP-Rule" id="MF_01708"/>
    </source>
</evidence>
<reference key="1">
    <citation type="submission" date="2006-01" db="EMBL/GenBank/DDBJ databases">
        <title>Complete sequence of Anaeromyxobacter dehalogenans 2CP-C.</title>
        <authorList>
            <person name="Copeland A."/>
            <person name="Lucas S."/>
            <person name="Lapidus A."/>
            <person name="Barry K."/>
            <person name="Detter J.C."/>
            <person name="Glavina T."/>
            <person name="Hammon N."/>
            <person name="Israni S."/>
            <person name="Pitluck S."/>
            <person name="Brettin T."/>
            <person name="Bruce D."/>
            <person name="Han C."/>
            <person name="Tapia R."/>
            <person name="Gilna P."/>
            <person name="Kiss H."/>
            <person name="Schmutz J."/>
            <person name="Larimer F."/>
            <person name="Land M."/>
            <person name="Kyrpides N."/>
            <person name="Anderson I."/>
            <person name="Sanford R.A."/>
            <person name="Ritalahti K.M."/>
            <person name="Thomas H.S."/>
            <person name="Kirby J.R."/>
            <person name="Zhulin I.B."/>
            <person name="Loeffler F.E."/>
            <person name="Richardson P."/>
        </authorList>
    </citation>
    <scope>NUCLEOTIDE SEQUENCE [LARGE SCALE GENOMIC DNA]</scope>
    <source>
        <strain>2CP-C</strain>
    </source>
</reference>
<comment type="function">
    <text evidence="1">Part of the ABC transporter complex LolCDE involved in the translocation of mature outer membrane-directed lipoproteins, from the inner membrane to the periplasmic chaperone, LolA. Responsible for the formation of the LolA-lipoprotein complex in an ATP-dependent manner.</text>
</comment>
<comment type="subunit">
    <text evidence="1">The complex is composed of two ATP-binding proteins (LolD) and two transmembrane proteins (LolC and LolE).</text>
</comment>
<comment type="subcellular location">
    <subcellularLocation>
        <location evidence="1">Cell inner membrane</location>
        <topology evidence="1">Peripheral membrane protein</topology>
    </subcellularLocation>
</comment>
<comment type="similarity">
    <text evidence="1">Belongs to the ABC transporter superfamily. Lipoprotein translocase (TC 3.A.1.125) family.</text>
</comment>
<accession>Q2IF17</accession>
<name>LOLD_ANADE</name>